<gene>
    <name evidence="19" type="primary">SLC5A7</name>
    <name type="synonym">CHT1</name>
</gene>
<dbReference type="EMBL" id="AF276871">
    <property type="protein sequence ID" value="AAG25940.1"/>
    <property type="molecule type" value="mRNA"/>
</dbReference>
<dbReference type="EMBL" id="AB043997">
    <property type="protein sequence ID" value="BAB18161.1"/>
    <property type="molecule type" value="mRNA"/>
</dbReference>
<dbReference type="EMBL" id="AJ401466">
    <property type="protein sequence ID" value="CAC03717.1"/>
    <property type="molecule type" value="mRNA"/>
</dbReference>
<dbReference type="EMBL" id="AJ308378">
    <property type="protein sequence ID" value="CAC88115.1"/>
    <property type="molecule type" value="Genomic_DNA"/>
</dbReference>
<dbReference type="EMBL" id="AJ308379">
    <property type="protein sequence ID" value="CAC88115.1"/>
    <property type="status" value="JOINED"/>
    <property type="molecule type" value="Genomic_DNA"/>
</dbReference>
<dbReference type="EMBL" id="AJ308380">
    <property type="protein sequence ID" value="CAC88115.1"/>
    <property type="status" value="JOINED"/>
    <property type="molecule type" value="Genomic_DNA"/>
</dbReference>
<dbReference type="EMBL" id="AJ308381">
    <property type="protein sequence ID" value="CAC88115.1"/>
    <property type="status" value="JOINED"/>
    <property type="molecule type" value="Genomic_DNA"/>
</dbReference>
<dbReference type="EMBL" id="AJ308382">
    <property type="protein sequence ID" value="CAC88115.1"/>
    <property type="status" value="JOINED"/>
    <property type="molecule type" value="Genomic_DNA"/>
</dbReference>
<dbReference type="EMBL" id="AJ308383">
    <property type="protein sequence ID" value="CAC88115.1"/>
    <property type="status" value="JOINED"/>
    <property type="molecule type" value="Genomic_DNA"/>
</dbReference>
<dbReference type="EMBL" id="AJ308384">
    <property type="protein sequence ID" value="CAC88115.1"/>
    <property type="status" value="JOINED"/>
    <property type="molecule type" value="Genomic_DNA"/>
</dbReference>
<dbReference type="EMBL" id="AC009963">
    <property type="protein sequence ID" value="AAY14927.1"/>
    <property type="molecule type" value="Genomic_DNA"/>
</dbReference>
<dbReference type="EMBL" id="BC111525">
    <property type="protein sequence ID" value="AAI11526.1"/>
    <property type="molecule type" value="mRNA"/>
</dbReference>
<dbReference type="CCDS" id="CCDS2074.1"/>
<dbReference type="PIR" id="JC7502">
    <property type="entry name" value="JC7502"/>
</dbReference>
<dbReference type="RefSeq" id="NP_001291934.1">
    <property type="nucleotide sequence ID" value="NM_001305005.3"/>
</dbReference>
<dbReference type="RefSeq" id="NP_068587.1">
    <property type="nucleotide sequence ID" value="NM_021815.5"/>
</dbReference>
<dbReference type="RefSeq" id="XP_047301325.1">
    <property type="nucleotide sequence ID" value="XM_047445369.1"/>
</dbReference>
<dbReference type="RefSeq" id="XP_054199244.1">
    <property type="nucleotide sequence ID" value="XM_054343269.1"/>
</dbReference>
<dbReference type="PDB" id="8J74">
    <property type="method" value="EM"/>
    <property type="resolution" value="3.60 A"/>
    <property type="chains" value="A/B=1-580"/>
</dbReference>
<dbReference type="PDB" id="8J75">
    <property type="method" value="EM"/>
    <property type="resolution" value="3.60 A"/>
    <property type="chains" value="A=1-580"/>
</dbReference>
<dbReference type="PDB" id="8J76">
    <property type="method" value="EM"/>
    <property type="resolution" value="3.70 A"/>
    <property type="chains" value="A=1-580"/>
</dbReference>
<dbReference type="PDB" id="8J77">
    <property type="method" value="EM"/>
    <property type="resolution" value="3.70 A"/>
    <property type="chains" value="A=1-580"/>
</dbReference>
<dbReference type="PDB" id="8ZQO">
    <property type="method" value="EM"/>
    <property type="resolution" value="2.80 A"/>
    <property type="chains" value="A=1-580"/>
</dbReference>
<dbReference type="PDB" id="8ZQP">
    <property type="method" value="EM"/>
    <property type="resolution" value="3.10 A"/>
    <property type="chains" value="A=1-580"/>
</dbReference>
<dbReference type="PDB" id="8ZQQ">
    <property type="method" value="EM"/>
    <property type="resolution" value="2.50 A"/>
    <property type="chains" value="A=1-580"/>
</dbReference>
<dbReference type="PDB" id="8ZQR">
    <property type="method" value="EM"/>
    <property type="resolution" value="3.60 A"/>
    <property type="chains" value="A=1-580"/>
</dbReference>
<dbReference type="PDB" id="9BFI">
    <property type="method" value="EM"/>
    <property type="resolution" value="2.66 A"/>
    <property type="chains" value="A=1-580"/>
</dbReference>
<dbReference type="PDB" id="9BFJ">
    <property type="method" value="EM"/>
    <property type="resolution" value="2.35 A"/>
    <property type="chains" value="A=1-580"/>
</dbReference>
<dbReference type="PDB" id="9BFK">
    <property type="method" value="EM"/>
    <property type="resolution" value="2.85 A"/>
    <property type="chains" value="A=1-580"/>
</dbReference>
<dbReference type="PDB" id="9BIM">
    <property type="method" value="EM"/>
    <property type="resolution" value="3.67 A"/>
    <property type="chains" value="A=1-580"/>
</dbReference>
<dbReference type="PDBsum" id="8J74"/>
<dbReference type="PDBsum" id="8J75"/>
<dbReference type="PDBsum" id="8J76"/>
<dbReference type="PDBsum" id="8J77"/>
<dbReference type="PDBsum" id="8ZQO"/>
<dbReference type="PDBsum" id="8ZQP"/>
<dbReference type="PDBsum" id="8ZQQ"/>
<dbReference type="PDBsum" id="8ZQR"/>
<dbReference type="PDBsum" id="9BFI"/>
<dbReference type="PDBsum" id="9BFJ"/>
<dbReference type="PDBsum" id="9BFK"/>
<dbReference type="PDBsum" id="9BIM"/>
<dbReference type="EMDB" id="EMD-36025"/>
<dbReference type="EMDB" id="EMD-36027"/>
<dbReference type="EMDB" id="EMD-36029"/>
<dbReference type="EMDB" id="EMD-36030"/>
<dbReference type="EMDB" id="EMD-44497"/>
<dbReference type="EMDB" id="EMD-44498"/>
<dbReference type="EMDB" id="EMD-44499"/>
<dbReference type="EMDB" id="EMD-44593"/>
<dbReference type="EMDB" id="EMD-60386"/>
<dbReference type="EMDB" id="EMD-60387"/>
<dbReference type="EMDB" id="EMD-60388"/>
<dbReference type="EMDB" id="EMD-60389"/>
<dbReference type="SMR" id="Q9GZV3"/>
<dbReference type="BioGRID" id="121915">
    <property type="interactions" value="8"/>
</dbReference>
<dbReference type="FunCoup" id="Q9GZV3">
    <property type="interactions" value="135"/>
</dbReference>
<dbReference type="IntAct" id="Q9GZV3">
    <property type="interactions" value="2"/>
</dbReference>
<dbReference type="STRING" id="9606.ENSP00000264047"/>
<dbReference type="BindingDB" id="Q9GZV3"/>
<dbReference type="ChEMBL" id="CHEMBL4507"/>
<dbReference type="DrugBank" id="DB00122">
    <property type="generic name" value="Choline"/>
</dbReference>
<dbReference type="DrugBank" id="DB14006">
    <property type="generic name" value="Choline salicylate"/>
</dbReference>
<dbReference type="DrugCentral" id="Q9GZV3"/>
<dbReference type="GuidetoPHARMACOLOGY" id="914"/>
<dbReference type="TCDB" id="2.A.21.8.2">
    <property type="family name" value="the solute:sodium symporter (sss) family"/>
</dbReference>
<dbReference type="GlyCosmos" id="Q9GZV3">
    <property type="glycosylation" value="1 site, No reported glycans"/>
</dbReference>
<dbReference type="GlyGen" id="Q9GZV3">
    <property type="glycosylation" value="2 sites"/>
</dbReference>
<dbReference type="iPTMnet" id="Q9GZV3"/>
<dbReference type="PhosphoSitePlus" id="Q9GZV3"/>
<dbReference type="BioMuta" id="SLC5A7"/>
<dbReference type="DMDM" id="56404957"/>
<dbReference type="jPOST" id="Q9GZV3"/>
<dbReference type="MassIVE" id="Q9GZV3"/>
<dbReference type="PaxDb" id="9606-ENSP00000264047"/>
<dbReference type="PeptideAtlas" id="Q9GZV3"/>
<dbReference type="Antibodypedia" id="33052">
    <property type="antibodies" value="89 antibodies from 23 providers"/>
</dbReference>
<dbReference type="DNASU" id="60482"/>
<dbReference type="Ensembl" id="ENST00000264047.3">
    <property type="protein sequence ID" value="ENSP00000264047.2"/>
    <property type="gene ID" value="ENSG00000115665.9"/>
</dbReference>
<dbReference type="Ensembl" id="ENST00000409059.5">
    <property type="protein sequence ID" value="ENSP00000387346.1"/>
    <property type="gene ID" value="ENSG00000115665.9"/>
</dbReference>
<dbReference type="GeneID" id="60482"/>
<dbReference type="KEGG" id="hsa:60482"/>
<dbReference type="MANE-Select" id="ENST00000264047.3">
    <property type="protein sequence ID" value="ENSP00000264047.2"/>
    <property type="RefSeq nucleotide sequence ID" value="NM_021815.5"/>
    <property type="RefSeq protein sequence ID" value="NP_068587.1"/>
</dbReference>
<dbReference type="UCSC" id="uc002tdv.4">
    <property type="organism name" value="human"/>
</dbReference>
<dbReference type="AGR" id="HGNC:14025"/>
<dbReference type="CTD" id="60482"/>
<dbReference type="DisGeNET" id="60482"/>
<dbReference type="GeneCards" id="SLC5A7"/>
<dbReference type="GeneReviews" id="SLC5A7"/>
<dbReference type="HGNC" id="HGNC:14025">
    <property type="gene designation" value="SLC5A7"/>
</dbReference>
<dbReference type="HPA" id="ENSG00000115665">
    <property type="expression patterns" value="Tissue enhanced (brain, intestine)"/>
</dbReference>
<dbReference type="MalaCards" id="SLC5A7"/>
<dbReference type="MIM" id="158580">
    <property type="type" value="phenotype"/>
</dbReference>
<dbReference type="MIM" id="608761">
    <property type="type" value="gene"/>
</dbReference>
<dbReference type="MIM" id="617143">
    <property type="type" value="phenotype"/>
</dbReference>
<dbReference type="neXtProt" id="NX_Q9GZV3"/>
<dbReference type="OpenTargets" id="ENSG00000115665"/>
<dbReference type="Orphanet" id="139589">
    <property type="disease" value="Distal hereditary motor neuropathy type 7"/>
</dbReference>
<dbReference type="Orphanet" id="98914">
    <property type="disease" value="Presynaptic congenital myasthenic syndromes"/>
</dbReference>
<dbReference type="PharmGKB" id="PA37838"/>
<dbReference type="VEuPathDB" id="HostDB:ENSG00000115665"/>
<dbReference type="eggNOG" id="KOG3761">
    <property type="taxonomic scope" value="Eukaryota"/>
</dbReference>
<dbReference type="GeneTree" id="ENSGT00690000101915"/>
<dbReference type="HOGENOM" id="CLU_018808_10_0_1"/>
<dbReference type="InParanoid" id="Q9GZV3"/>
<dbReference type="OMA" id="WKTKNTG"/>
<dbReference type="OrthoDB" id="546820at2759"/>
<dbReference type="PAN-GO" id="Q9GZV3">
    <property type="GO annotations" value="10 GO annotations based on evolutionary models"/>
</dbReference>
<dbReference type="PhylomeDB" id="Q9GZV3"/>
<dbReference type="TreeFam" id="TF314588"/>
<dbReference type="PathwayCommons" id="Q9GZV3"/>
<dbReference type="Reactome" id="R-HSA-264642">
    <property type="pathway name" value="Acetylcholine Neurotransmitter Release Cycle"/>
</dbReference>
<dbReference type="Reactome" id="R-HSA-425366">
    <property type="pathway name" value="Transport of bile salts and organic acids, metal ions and amine compounds"/>
</dbReference>
<dbReference type="Reactome" id="R-HSA-5619114">
    <property type="pathway name" value="Defective SLC5A7 causes distal hereditary motor neuronopathy 7A (HMN7A)"/>
</dbReference>
<dbReference type="Reactome" id="R-HSA-5658471">
    <property type="pathway name" value="Defective SLC5A7 causes distal hereditary motor neuronopathy 7A (HMN7A)"/>
</dbReference>
<dbReference type="SignaLink" id="Q9GZV3"/>
<dbReference type="BioGRID-ORCS" id="60482">
    <property type="hits" value="15 hits in 1147 CRISPR screens"/>
</dbReference>
<dbReference type="GeneWiki" id="Choline_transporter"/>
<dbReference type="GenomeRNAi" id="60482"/>
<dbReference type="Pharos" id="Q9GZV3">
    <property type="development level" value="Tchem"/>
</dbReference>
<dbReference type="PRO" id="PR:Q9GZV3"/>
<dbReference type="Proteomes" id="UP000005640">
    <property type="component" value="Chromosome 2"/>
</dbReference>
<dbReference type="RNAct" id="Q9GZV3">
    <property type="molecule type" value="protein"/>
</dbReference>
<dbReference type="Bgee" id="ENSG00000115665">
    <property type="expression patterns" value="Expressed in male germ line stem cell (sensu Vertebrata) in testis and 77 other cell types or tissues"/>
</dbReference>
<dbReference type="GO" id="GO:0030424">
    <property type="term" value="C:axon"/>
    <property type="evidence" value="ECO:0000318"/>
    <property type="project" value="GO_Central"/>
</dbReference>
<dbReference type="GO" id="GO:0030425">
    <property type="term" value="C:dendrite"/>
    <property type="evidence" value="ECO:0000318"/>
    <property type="project" value="GO_Central"/>
</dbReference>
<dbReference type="GO" id="GO:0031901">
    <property type="term" value="C:early endosome membrane"/>
    <property type="evidence" value="ECO:0000314"/>
    <property type="project" value="UniProtKB"/>
</dbReference>
<dbReference type="GO" id="GO:0016020">
    <property type="term" value="C:membrane"/>
    <property type="evidence" value="ECO:0000314"/>
    <property type="project" value="UniProtKB"/>
</dbReference>
<dbReference type="GO" id="GO:0031594">
    <property type="term" value="C:neuromuscular junction"/>
    <property type="evidence" value="ECO:0000314"/>
    <property type="project" value="UniProtKB"/>
</dbReference>
<dbReference type="GO" id="GO:0043204">
    <property type="term" value="C:perikaryon"/>
    <property type="evidence" value="ECO:0000318"/>
    <property type="project" value="GO_Central"/>
</dbReference>
<dbReference type="GO" id="GO:0005886">
    <property type="term" value="C:plasma membrane"/>
    <property type="evidence" value="ECO:0000314"/>
    <property type="project" value="MGI"/>
</dbReference>
<dbReference type="GO" id="GO:0042734">
    <property type="term" value="C:presynaptic membrane"/>
    <property type="evidence" value="ECO:0000314"/>
    <property type="project" value="UniProtKB"/>
</dbReference>
<dbReference type="GO" id="GO:0045202">
    <property type="term" value="C:synapse"/>
    <property type="evidence" value="ECO:0000318"/>
    <property type="project" value="GO_Central"/>
</dbReference>
<dbReference type="GO" id="GO:0030672">
    <property type="term" value="C:synaptic vesicle membrane"/>
    <property type="evidence" value="ECO:0000314"/>
    <property type="project" value="UniProtKB"/>
</dbReference>
<dbReference type="GO" id="GO:0033265">
    <property type="term" value="F:choline binding"/>
    <property type="evidence" value="ECO:0007669"/>
    <property type="project" value="Ensembl"/>
</dbReference>
<dbReference type="GO" id="GO:0015220">
    <property type="term" value="F:choline transmembrane transporter activity"/>
    <property type="evidence" value="ECO:0000314"/>
    <property type="project" value="UniProtKB"/>
</dbReference>
<dbReference type="GO" id="GO:0005307">
    <property type="term" value="F:choline:sodium symporter activity"/>
    <property type="evidence" value="ECO:0000314"/>
    <property type="project" value="UniProtKB"/>
</dbReference>
<dbReference type="GO" id="GO:0008292">
    <property type="term" value="P:acetylcholine biosynthetic process"/>
    <property type="evidence" value="ECO:0000314"/>
    <property type="project" value="UniProtKB"/>
</dbReference>
<dbReference type="GO" id="GO:0015871">
    <property type="term" value="P:choline transport"/>
    <property type="evidence" value="ECO:0000314"/>
    <property type="project" value="UniProtKB"/>
</dbReference>
<dbReference type="GO" id="GO:0001701">
    <property type="term" value="P:in utero embryonic development"/>
    <property type="evidence" value="ECO:0007669"/>
    <property type="project" value="Ensembl"/>
</dbReference>
<dbReference type="GO" id="GO:0007274">
    <property type="term" value="P:neuromuscular synaptic transmission"/>
    <property type="evidence" value="ECO:0000318"/>
    <property type="project" value="GO_Central"/>
</dbReference>
<dbReference type="GO" id="GO:0006836">
    <property type="term" value="P:neurotransmitter transport"/>
    <property type="evidence" value="ECO:0000304"/>
    <property type="project" value="Reactome"/>
</dbReference>
<dbReference type="GO" id="GO:0007271">
    <property type="term" value="P:synaptic transmission, cholinergic"/>
    <property type="evidence" value="ECO:0000318"/>
    <property type="project" value="GO_Central"/>
</dbReference>
<dbReference type="GO" id="GO:0055085">
    <property type="term" value="P:transmembrane transport"/>
    <property type="evidence" value="ECO:0000304"/>
    <property type="project" value="Reactome"/>
</dbReference>
<dbReference type="CDD" id="cd11474">
    <property type="entry name" value="SLC5sbd_CHT"/>
    <property type="match status" value="1"/>
</dbReference>
<dbReference type="FunFam" id="1.20.1730.10:FF:000008">
    <property type="entry name" value="High affinity choline transporter 1"/>
    <property type="match status" value="1"/>
</dbReference>
<dbReference type="Gene3D" id="1.20.1730.10">
    <property type="entry name" value="Sodium/glucose cotransporter"/>
    <property type="match status" value="1"/>
</dbReference>
<dbReference type="InterPro" id="IPR052244">
    <property type="entry name" value="Choline_transporter"/>
</dbReference>
<dbReference type="InterPro" id="IPR038377">
    <property type="entry name" value="Na/Glc_symporter_sf"/>
</dbReference>
<dbReference type="InterPro" id="IPR001734">
    <property type="entry name" value="Na/solute_symporter"/>
</dbReference>
<dbReference type="PANTHER" id="PTHR45897:SF2">
    <property type="entry name" value="HIGH AFFINITY CHOLINE TRANSPORTER 1"/>
    <property type="match status" value="1"/>
</dbReference>
<dbReference type="PANTHER" id="PTHR45897">
    <property type="entry name" value="HIGH-AFFINITY CHOLINE TRANSPORTER 1"/>
    <property type="match status" value="1"/>
</dbReference>
<dbReference type="Pfam" id="PF00474">
    <property type="entry name" value="SSF"/>
    <property type="match status" value="1"/>
</dbReference>
<dbReference type="PROSITE" id="PS50283">
    <property type="entry name" value="NA_SOLUT_SYMP_3"/>
    <property type="match status" value="1"/>
</dbReference>
<sequence length="580" mass="63204">MAFHVEGLIAIIVFYLLILLVGIWAAWRTKNSGSAEERSEAIIVGGRDIGLLVGGFTMTATWVGGGYINGTAEAVYVPGYGLAWAQAPIGYSLSLILGGLFFAKPMRSKGYVTMLDPFQQIYGKRMGGLLFIPALMGEMFWAAAIFSALGATISVIIDVDMHISVIISALIATLYTLVGGLYSVAYTDVVQLFCIFVGLWISVPFALSHPAVADIGFTAVHAKYQKPWLGTVDSSEVYSWLDSFLLLMLGGIPWQAYFQRVLSSSSATYAQVLSFLAAFGCLVMAIPAILIGAIGASTDWNQTAYGLPDPKTTEEADMILPIVLQYLCPVYISFFGLGAVSAAVMSSADSSILSASSMFARNIYQLSFRQNASDKEIVWVMRITVFVFGASATAMALLTKTVYGLWYLSSDLVYIVIFPQLLCVLFVKGTNTYGAVAGYVSGLFLRITGGEPYLYLQPLIFYPGYYPDDNGIYNQKFPFKTLAMVTSFLTNICISYLAKYLFESGTLPPKLDVFDAVVARHSEENMDKTILVKNENIKLDELALVKPRQSMTLSSTFTNKEAFLDVDSSPEGSGTEDNLQ</sequence>
<accession>Q9GZV3</accession>
<accession>Q53TF2</accession>
<reference key="1">
    <citation type="journal article" date="2000" name="Biochem. Biophys. Res. Commun.">
        <title>Molecular cloning of a human, hemicholinium-3-sensitive choline transporter.</title>
        <authorList>
            <person name="Apparsundaram S."/>
            <person name="Ferguson S.M."/>
            <person name="George A.L. Jr."/>
            <person name="Blakely R.D."/>
        </authorList>
    </citation>
    <scope>NUCLEOTIDE SEQUENCE [MRNA]</scope>
    <scope>FUNCTION</scope>
    <scope>TRANSPORTER ACTIVITY</scope>
    <scope>BIOPHYSICOCHEMICAL PROPERTIES</scope>
    <scope>ACTIVITY REGULATION</scope>
    <scope>SUBCELLULAR LOCATION</scope>
    <scope>TISSUE SPECIFICITY</scope>
    <source>
        <tissue>Spinal cord</tissue>
    </source>
</reference>
<reference key="2">
    <citation type="journal article" date="2000" name="FEBS Lett.">
        <title>Functional characterization of the human high-affinity choline transporter.</title>
        <authorList>
            <person name="Okuda T."/>
            <person name="Haga T."/>
        </authorList>
    </citation>
    <scope>NUCLEOTIDE SEQUENCE [MRNA]</scope>
    <scope>FUNCTION</scope>
    <scope>TRANSPORTER ACTIVITY</scope>
    <scope>BIOPHYSICOCHEMICAL PROPERTIES</scope>
    <scope>ACTIVITY REGULATION</scope>
    <scope>TISSUE SPECIFICITY</scope>
    <source>
        <tissue>Spinal cord</tissue>
    </source>
</reference>
<reference key="3">
    <citation type="submission" date="2002-01" db="EMBL/GenBank/DDBJ databases">
        <title>Molecular cloning of the human and murine high affinity choline transporters and characterization of the human gene structure.</title>
        <authorList>
            <person name="Wieland A."/>
            <person name="Bonisch H."/>
            <person name="Bruess M."/>
        </authorList>
    </citation>
    <scope>NUCLEOTIDE SEQUENCE [GENOMIC DNA]</scope>
    <source>
        <tissue>Hypothalamus</tissue>
    </source>
</reference>
<reference key="4">
    <citation type="journal article" date="2005" name="Nature">
        <title>Generation and annotation of the DNA sequences of human chromosomes 2 and 4.</title>
        <authorList>
            <person name="Hillier L.W."/>
            <person name="Graves T.A."/>
            <person name="Fulton R.S."/>
            <person name="Fulton L.A."/>
            <person name="Pepin K.H."/>
            <person name="Minx P."/>
            <person name="Wagner-McPherson C."/>
            <person name="Layman D."/>
            <person name="Wylie K."/>
            <person name="Sekhon M."/>
            <person name="Becker M.C."/>
            <person name="Fewell G.A."/>
            <person name="Delehaunty K.D."/>
            <person name="Miner T.L."/>
            <person name="Nash W.E."/>
            <person name="Kremitzki C."/>
            <person name="Oddy L."/>
            <person name="Du H."/>
            <person name="Sun H."/>
            <person name="Bradshaw-Cordum H."/>
            <person name="Ali J."/>
            <person name="Carter J."/>
            <person name="Cordes M."/>
            <person name="Harris A."/>
            <person name="Isak A."/>
            <person name="van Brunt A."/>
            <person name="Nguyen C."/>
            <person name="Du F."/>
            <person name="Courtney L."/>
            <person name="Kalicki J."/>
            <person name="Ozersky P."/>
            <person name="Abbott S."/>
            <person name="Armstrong J."/>
            <person name="Belter E.A."/>
            <person name="Caruso L."/>
            <person name="Cedroni M."/>
            <person name="Cotton M."/>
            <person name="Davidson T."/>
            <person name="Desai A."/>
            <person name="Elliott G."/>
            <person name="Erb T."/>
            <person name="Fronick C."/>
            <person name="Gaige T."/>
            <person name="Haakenson W."/>
            <person name="Haglund K."/>
            <person name="Holmes A."/>
            <person name="Harkins R."/>
            <person name="Kim K."/>
            <person name="Kruchowski S.S."/>
            <person name="Strong C.M."/>
            <person name="Grewal N."/>
            <person name="Goyea E."/>
            <person name="Hou S."/>
            <person name="Levy A."/>
            <person name="Martinka S."/>
            <person name="Mead K."/>
            <person name="McLellan M.D."/>
            <person name="Meyer R."/>
            <person name="Randall-Maher J."/>
            <person name="Tomlinson C."/>
            <person name="Dauphin-Kohlberg S."/>
            <person name="Kozlowicz-Reilly A."/>
            <person name="Shah N."/>
            <person name="Swearengen-Shahid S."/>
            <person name="Snider J."/>
            <person name="Strong J.T."/>
            <person name="Thompson J."/>
            <person name="Yoakum M."/>
            <person name="Leonard S."/>
            <person name="Pearman C."/>
            <person name="Trani L."/>
            <person name="Radionenko M."/>
            <person name="Waligorski J.E."/>
            <person name="Wang C."/>
            <person name="Rock S.M."/>
            <person name="Tin-Wollam A.-M."/>
            <person name="Maupin R."/>
            <person name="Latreille P."/>
            <person name="Wendl M.C."/>
            <person name="Yang S.-P."/>
            <person name="Pohl C."/>
            <person name="Wallis J.W."/>
            <person name="Spieth J."/>
            <person name="Bieri T.A."/>
            <person name="Berkowicz N."/>
            <person name="Nelson J.O."/>
            <person name="Osborne J."/>
            <person name="Ding L."/>
            <person name="Meyer R."/>
            <person name="Sabo A."/>
            <person name="Shotland Y."/>
            <person name="Sinha P."/>
            <person name="Wohldmann P.E."/>
            <person name="Cook L.L."/>
            <person name="Hickenbotham M.T."/>
            <person name="Eldred J."/>
            <person name="Williams D."/>
            <person name="Jones T.A."/>
            <person name="She X."/>
            <person name="Ciccarelli F.D."/>
            <person name="Izaurralde E."/>
            <person name="Taylor J."/>
            <person name="Schmutz J."/>
            <person name="Myers R.M."/>
            <person name="Cox D.R."/>
            <person name="Huang X."/>
            <person name="McPherson J.D."/>
            <person name="Mardis E.R."/>
            <person name="Clifton S.W."/>
            <person name="Warren W.C."/>
            <person name="Chinwalla A.T."/>
            <person name="Eddy S.R."/>
            <person name="Marra M.A."/>
            <person name="Ovcharenko I."/>
            <person name="Furey T.S."/>
            <person name="Miller W."/>
            <person name="Eichler E.E."/>
            <person name="Bork P."/>
            <person name="Suyama M."/>
            <person name="Torrents D."/>
            <person name="Waterston R.H."/>
            <person name="Wilson R.K."/>
        </authorList>
    </citation>
    <scope>NUCLEOTIDE SEQUENCE [LARGE SCALE GENOMIC DNA]</scope>
</reference>
<reference key="5">
    <citation type="journal article" date="2004" name="Genome Res.">
        <title>The status, quality, and expansion of the NIH full-length cDNA project: the Mammalian Gene Collection (MGC).</title>
        <authorList>
            <consortium name="The MGC Project Team"/>
        </authorList>
    </citation>
    <scope>NUCLEOTIDE SEQUENCE [LARGE SCALE MRNA]</scope>
</reference>
<reference key="6">
    <citation type="journal article" date="2003" name="J. Neurochem.">
        <title>The hemicholinium-3 sensitive high affinity choline transporter is internalized by clathrin-mediated endocytosis and is present in endosomes and synaptic vesicles.</title>
        <authorList>
            <person name="Ribeiro F.M."/>
            <person name="Alves-Silva J."/>
            <person name="Volknandt W."/>
            <person name="Martins-Silva C."/>
            <person name="Mahmud H."/>
            <person name="Wilhelm A."/>
            <person name="Gomez M.V."/>
            <person name="Rylett R.J."/>
            <person name="Ferguson S.S."/>
            <person name="Prado V.F."/>
            <person name="Prado M.A."/>
        </authorList>
    </citation>
    <scope>FUNCTION</scope>
    <scope>TRANSPORTER ACTIVITY</scope>
    <scope>ACTIVITY REGULATION</scope>
    <scope>BIOPHYSICOCHEMICAL PROPERTIES</scope>
    <scope>SUBCELLULAR LOCATION</scope>
</reference>
<reference key="7">
    <citation type="journal article" date="2005" name="J. Neurochem.">
        <title>Constitutive high-affinity choline transporter endocytosis is determined by a carboxyl-terminal tail dileucine motif.</title>
        <authorList>
            <person name="Ribeiro F.M."/>
            <person name="Black S.A."/>
            <person name="Cregan S.P."/>
            <person name="Prado V.F."/>
            <person name="Prado M.A."/>
            <person name="Rylett R.J."/>
            <person name="Ferguson S.S."/>
        </authorList>
    </citation>
    <scope>FUNCTION</scope>
    <scope>ACTIVITY REGULATION</scope>
    <scope>SUBCELLULAR LOCATION</scope>
    <scope>DOMAIN</scope>
    <scope>MUTAGENESIS OF ILE-530; LEU-531 AND VAL-532</scope>
</reference>
<reference key="8">
    <citation type="journal article" date="2006" name="J. Neurosci.">
        <title>Na+, Cl-, and pH dependence of the human choline transporter (hCHT) in Xenopus oocytes: the proton inactivation hypothesis of hCHT in synaptic vesicles.</title>
        <authorList>
            <person name="Iwamoto H."/>
            <person name="Blakely R.D."/>
            <person name="De Felice L.J."/>
        </authorList>
    </citation>
    <scope>FUNCTION</scope>
    <scope>TRANSPORTER ACTIVITY</scope>
    <scope>ACTIVITY REGULATION</scope>
    <scope>BIOPHYSICOCHEMICAL PROPERTIES</scope>
    <scope>DOMAIN</scope>
    <scope>MUTAGENESIS OF 531-LEU-VAL-532 AND LYS-538</scope>
</reference>
<reference key="9">
    <citation type="journal article" date="2007" name="Neurochem. Int.">
        <title>SEC14-like protein 1 interacts with cholinergic transporters.</title>
        <authorList>
            <person name="Ribeiro F.M."/>
            <person name="Ferreira L.T."/>
            <person name="Marion S."/>
            <person name="Fontes S."/>
            <person name="Gomez M."/>
            <person name="Ferguson S.S."/>
            <person name="Prado M.A."/>
            <person name="Prado V.F."/>
        </authorList>
    </citation>
    <scope>INTERACTION WITH SEC14L1</scope>
</reference>
<reference key="10">
    <citation type="journal article" date="2012" name="Am. J. Hum. Genet.">
        <title>Defective presynaptic choline transport underlies hereditary motor neuropathy.</title>
        <authorList>
            <person name="Barwick K.E."/>
            <person name="Wright J."/>
            <person name="Al-Turki S."/>
            <person name="McEntagart M.M."/>
            <person name="Nair A."/>
            <person name="Chioza B."/>
            <person name="Al-Memar A."/>
            <person name="Modarres H."/>
            <person name="Reilly M.M."/>
            <person name="Dick K.J."/>
            <person name="Ruggiero A.M."/>
            <person name="Blakely R.D."/>
            <person name="Hurles M.E."/>
            <person name="Crosby A.H."/>
        </authorList>
    </citation>
    <scope>FUNCTION</scope>
    <scope>TRANSPORTER ACTIVITY</scope>
    <scope>INVOLVEMENT IN HMND7</scope>
</reference>
<reference key="11">
    <citation type="journal article" date="2012" name="J. Biol. Chem.">
        <title>Transmembrane topology and oligomeric structure of the high-affinity choline transporter.</title>
        <authorList>
            <person name="Okuda T."/>
            <person name="Osawa C."/>
            <person name="Yamada H."/>
            <person name="Hayashi K."/>
            <person name="Nishikawa S."/>
            <person name="Ushio T."/>
            <person name="Kubo Y."/>
            <person name="Satou M."/>
            <person name="Ogawa H."/>
            <person name="Haga T."/>
        </authorList>
    </citation>
    <scope>FUNCTION</scope>
    <scope>TRANSPORTER ACTIVITY</scope>
    <scope>ACTIVITY REGULATION</scope>
    <scope>TOPOLOGY</scope>
    <scope>SUBUNIT</scope>
    <scope>MUTAGENESIS OF ILE-89 AND GLU-451</scope>
</reference>
<reference key="12">
    <citation type="journal article" date="2002" name="J. Biol. Chem.">
        <title>Single nucleotide polymorphism of the human high affinity choline transporter alters transport rate.</title>
        <authorList>
            <person name="Okuda T."/>
            <person name="Okamura M."/>
            <person name="Kaitsuka C."/>
            <person name="Haga T."/>
            <person name="Gurwitz D."/>
        </authorList>
    </citation>
    <scope>FUNCTION</scope>
    <scope>TRANSPORTER ACTIVITY</scope>
    <scope>BIOPHYSICOCHEMICAL PROPERTIES</scope>
    <scope>ACTIVITY REGULATION</scope>
    <scope>VARIANT VAL-89</scope>
</reference>
<reference key="13">
    <citation type="journal article" date="2016" name="Am. J. Hum. Genet.">
        <title>Impaired presynaptic high-affinity choline transporter causes a congenital myasthenic syndrome with episodic apnea.</title>
        <authorList>
            <person name="Bauche S."/>
            <person name="O'Regan S."/>
            <person name="Azuma Y."/>
            <person name="Laffargue F."/>
            <person name="McMacken G."/>
            <person name="Sternberg D."/>
            <person name="Brochier G."/>
            <person name="Buon C."/>
            <person name="Bouzidi N."/>
            <person name="Topf A."/>
            <person name="Lacene E."/>
            <person name="Remerand G."/>
            <person name="Beaufrere A.M."/>
            <person name="Pebrel-Richard C."/>
            <person name="Thevenon J."/>
            <person name="El Chehadeh-Djebbar S."/>
            <person name="Faivre L."/>
            <person name="Duffourd Y."/>
            <person name="Ricci F."/>
            <person name="Mongini T."/>
            <person name="Fiorillo C."/>
            <person name="Astrea G."/>
            <person name="Burloiu C.M."/>
            <person name="Butoianu N."/>
            <person name="Sandu C."/>
            <person name="Servais L."/>
            <person name="Bonne G."/>
            <person name="Nelson I."/>
            <person name="Desguerre I."/>
            <person name="Nougues M.C."/>
            <person name="Boeuf B."/>
            <person name="Romero N."/>
            <person name="Laporte J."/>
            <person name="Boland A."/>
            <person name="Lechner D."/>
            <person name="Deleuze J.F."/>
            <person name="Fontaine B."/>
            <person name="Strochlic L."/>
            <person name="Lochmuller H."/>
            <person name="Eymard B."/>
            <person name="Mayer M."/>
            <person name="Nicole S."/>
        </authorList>
    </citation>
    <scope>FUNCTION</scope>
    <scope>TRANSPORTER ACTIVITY</scope>
    <scope>SUBCELLULAR LOCATION</scope>
    <scope>TISSUE SPECIFICITY</scope>
    <scope>INVOLVEMENT IN CMS20</scope>
    <scope>VARIANTS CMS20 GLY-48; GLU-65; SER-105; HIS-111; CYS-175; THR-291; LEU-344; GLN-361; VAL-418 AND GLY-446</scope>
    <scope>CHARACTERIZATION OF VARIANTS CMS20 GLY-48; GLU-65; SER-105; GLN-361 AND GLY-446</scope>
</reference>
<feature type="chain" id="PRO_0000105391" description="High affinity choline transporter 1">
    <location>
        <begin position="1"/>
        <end position="580"/>
    </location>
</feature>
<feature type="topological domain" description="Extracellular" evidence="3">
    <location>
        <begin position="1"/>
        <end position="6"/>
    </location>
</feature>
<feature type="transmembrane region" description="Helical" evidence="3">
    <location>
        <begin position="7"/>
        <end position="27"/>
    </location>
</feature>
<feature type="topological domain" description="Cytoplasmic" evidence="3">
    <location>
        <begin position="28"/>
        <end position="48"/>
    </location>
</feature>
<feature type="transmembrane region" description="Helical" evidence="3">
    <location>
        <begin position="49"/>
        <end position="69"/>
    </location>
</feature>
<feature type="topological domain" description="Extracellular" evidence="3">
    <location>
        <begin position="70"/>
        <end position="81"/>
    </location>
</feature>
<feature type="transmembrane region" description="Helical" evidence="3">
    <location>
        <begin position="82"/>
        <end position="102"/>
    </location>
</feature>
<feature type="topological domain" description="Cytoplasmic" evidence="3">
    <location>
        <begin position="103"/>
        <end position="125"/>
    </location>
</feature>
<feature type="transmembrane region" description="Helical" evidence="3">
    <location>
        <begin position="126"/>
        <end position="146"/>
    </location>
</feature>
<feature type="topological domain" description="Extracellular" evidence="3">
    <location>
        <begin position="147"/>
        <end position="164"/>
    </location>
</feature>
<feature type="transmembrane region" description="Helical" evidence="3">
    <location>
        <begin position="165"/>
        <end position="185"/>
    </location>
</feature>
<feature type="topological domain" description="Cytoplasmic" evidence="3">
    <location>
        <begin position="186"/>
        <end position="191"/>
    </location>
</feature>
<feature type="transmembrane region" description="Helical" evidence="3">
    <location>
        <begin position="192"/>
        <end position="212"/>
    </location>
</feature>
<feature type="topological domain" description="Extracellular" evidence="3">
    <location>
        <begin position="213"/>
        <end position="237"/>
    </location>
</feature>
<feature type="transmembrane region" description="Helical" evidence="3">
    <location>
        <begin position="238"/>
        <end position="258"/>
    </location>
</feature>
<feature type="topological domain" description="Cytoplasmic" evidence="3">
    <location>
        <begin position="259"/>
        <end position="274"/>
    </location>
</feature>
<feature type="transmembrane region" description="Helical" evidence="3">
    <location>
        <begin position="275"/>
        <end position="295"/>
    </location>
</feature>
<feature type="topological domain" description="Extracellular" evidence="3">
    <location>
        <begin position="296"/>
        <end position="317"/>
    </location>
</feature>
<feature type="transmembrane region" description="Helical" evidence="3">
    <location>
        <begin position="318"/>
        <end position="338"/>
    </location>
</feature>
<feature type="topological domain" description="Cytoplasmic" evidence="3">
    <location>
        <begin position="339"/>
        <end position="376"/>
    </location>
</feature>
<feature type="transmembrane region" description="Helical" evidence="3">
    <location>
        <begin position="377"/>
        <end position="397"/>
    </location>
</feature>
<feature type="topological domain" description="Extracellular" evidence="3">
    <location>
        <begin position="398"/>
        <end position="406"/>
    </location>
</feature>
<feature type="transmembrane region" description="Helical" evidence="3">
    <location>
        <begin position="407"/>
        <end position="427"/>
    </location>
</feature>
<feature type="topological domain" description="Cytoplasmic" evidence="3">
    <location>
        <begin position="428"/>
        <end position="435"/>
    </location>
</feature>
<feature type="transmembrane region" description="Helical" evidence="3">
    <location>
        <begin position="436"/>
        <end position="456"/>
    </location>
</feature>
<feature type="topological domain" description="Extracellular" evidence="3">
    <location>
        <begin position="457"/>
        <end position="481"/>
    </location>
</feature>
<feature type="transmembrane region" description="Helical" evidence="3">
    <location>
        <begin position="482"/>
        <end position="502"/>
    </location>
</feature>
<feature type="topological domain" description="Cytoplasmic" evidence="3">
    <location>
        <begin position="503"/>
        <end position="580"/>
    </location>
</feature>
<feature type="region of interest" description="Mediates interaction with SEC14L1" evidence="2">
    <location>
        <begin position="502"/>
        <end position="580"/>
    </location>
</feature>
<feature type="short sequence motif" description="Dileucine-like motif" evidence="8">
    <location>
        <begin position="527"/>
        <end position="532"/>
    </location>
</feature>
<feature type="glycosylation site" description="N-linked (GlcNAc...) asparagine" evidence="3">
    <location>
        <position position="301"/>
    </location>
</feature>
<feature type="sequence variant" id="VAR_077854" description="In CMS20; decreased choline transmembrane transporter activity; no effect on localization at plasma membrane; dbSNP:rs886039768." evidence="13">
    <original>D</original>
    <variation>G</variation>
    <location>
        <position position="48"/>
    </location>
</feature>
<feature type="sequence variant" id="VAR_077855" description="In CMS20; loss of choline transmembrane transporter activity; no effect on localization at plasma membrane; dbSNP:rs886039765." evidence="13">
    <original>G</original>
    <variation>E</variation>
    <location>
        <position position="65"/>
    </location>
</feature>
<feature type="sequence variant" id="VAR_020524" description="40% reduction in choline transmembrane transporter activity; found in 0.06 of Ashkenazi Jews; dbSNP:rs1013940." evidence="6">
    <original>I</original>
    <variation>V</variation>
    <location>
        <position position="89"/>
    </location>
</feature>
<feature type="sequence variant" id="VAR_077856" description="In CMS20; decreased choline transmembrane transporter activity; no effect on localization at plasma membrane; dbSNP:rs886039766." evidence="13">
    <original>P</original>
    <variation>S</variation>
    <location>
        <position position="105"/>
    </location>
</feature>
<feature type="sequence variant" id="VAR_077857" description="In CMS20; no effect on localization at plasma membrane." evidence="13">
    <original>Y</original>
    <variation>H</variation>
    <location>
        <position position="111"/>
    </location>
</feature>
<feature type="sequence variant" id="VAR_077858" description="In CMS20; uncertain significance; dbSNP:rs1331713195." evidence="13">
    <original>Y</original>
    <variation>C</variation>
    <location>
        <position position="175"/>
    </location>
</feature>
<feature type="sequence variant" id="VAR_077859" description="In CMS20; uncertain significance; dbSNP:rs375397889." evidence="13">
    <original>I</original>
    <variation>T</variation>
    <location>
        <position position="291"/>
    </location>
</feature>
<feature type="sequence variant" id="VAR_077860" description="In CMS20; uncertain significance." evidence="13">
    <original>V</original>
    <variation>L</variation>
    <location>
        <position position="344"/>
    </location>
</feature>
<feature type="sequence variant" id="VAR_077861" description="In CMS20; decreased choline transmembrane transporter activity; no effect on localization at plasma membrane; dbSNP:rs147656110." evidence="13">
    <original>R</original>
    <variation>Q</variation>
    <location>
        <position position="361"/>
    </location>
</feature>
<feature type="sequence variant" id="VAR_077862" description="In CMS20; uncertain significance." evidence="13">
    <original>F</original>
    <variation>V</variation>
    <location>
        <position position="418"/>
    </location>
</feature>
<feature type="sequence variant" id="VAR_077863" description="In CMS20; decreased choline transmembrane transporter activity; no effect on localization at plasma membrane." evidence="13">
    <original>R</original>
    <variation>G</variation>
    <location>
        <position position="446"/>
    </location>
</feature>
<feature type="mutagenesis site" description="Decreased choline transmembrane transporter activity, only 20% of wild-type choline uptake activity." evidence="11">
    <original>I</original>
    <variation>A</variation>
    <location>
        <position position="89"/>
    </location>
</feature>
<feature type="mutagenesis site" description="Decreased choline transmembrane transporter activity, only 5% of wild-type choline uptake activity." evidence="11">
    <original>E</original>
    <variation>Q</variation>
    <location>
        <position position="451"/>
    </location>
</feature>
<feature type="mutagenesis site" description="No change in protein internalization. No change in choline transmembrane transporter activity." evidence="8">
    <original>I</original>
    <variation>A</variation>
    <location>
        <position position="530"/>
    </location>
</feature>
<feature type="mutagenesis site" description="Decreased protein internalization; when associated with V-538. Increased choline transmembrane transporter activity; when associated with V-538." evidence="9">
    <original>LV</original>
    <variation>AA</variation>
    <location>
        <begin position="531"/>
        <end position="532"/>
    </location>
</feature>
<feature type="mutagenesis site" description="Loss of protein internalization to vesicular structures in neurons. Increased choline transmembrane transporter activity." evidence="8">
    <original>L</original>
    <variation>A</variation>
    <location>
        <position position="531"/>
    </location>
</feature>
<feature type="mutagenesis site" description="Decreased protein internalization. Increased choline transmembrane transporter activity." evidence="8">
    <original>V</original>
    <variation>A</variation>
    <location>
        <position position="532"/>
    </location>
</feature>
<feature type="mutagenesis site" description="Decreased protein internalization; when associated with 531-L-V-532. Increased choline transmembrane transporter activity; when associated with 531-L-V-532." evidence="9">
    <original>K</original>
    <variation>V</variation>
    <location>
        <position position="538"/>
    </location>
</feature>
<feature type="helix" evidence="23">
    <location>
        <begin position="5"/>
        <end position="28"/>
    </location>
</feature>
<feature type="turn" evidence="20">
    <location>
        <begin position="29"/>
        <end position="31"/>
    </location>
</feature>
<feature type="helix" evidence="20">
    <location>
        <begin position="38"/>
        <end position="44"/>
    </location>
</feature>
<feature type="helix" evidence="23">
    <location>
        <begin position="50"/>
        <end position="62"/>
    </location>
</feature>
<feature type="helix" evidence="23">
    <location>
        <begin position="65"/>
        <end position="76"/>
    </location>
</feature>
<feature type="turn" evidence="23">
    <location>
        <begin position="78"/>
        <end position="80"/>
    </location>
</feature>
<feature type="helix" evidence="23">
    <location>
        <begin position="82"/>
        <end position="84"/>
    </location>
</feature>
<feature type="helix" evidence="23">
    <location>
        <begin position="86"/>
        <end position="101"/>
    </location>
</feature>
<feature type="helix" evidence="23">
    <location>
        <begin position="103"/>
        <end position="106"/>
    </location>
</feature>
<feature type="strand" evidence="22">
    <location>
        <begin position="113"/>
        <end position="115"/>
    </location>
</feature>
<feature type="helix" evidence="23">
    <location>
        <begin position="116"/>
        <end position="121"/>
    </location>
</feature>
<feature type="helix" evidence="23">
    <location>
        <begin position="124"/>
        <end position="156"/>
    </location>
</feature>
<feature type="helix" evidence="23">
    <location>
        <begin position="161"/>
        <end position="181"/>
    </location>
</feature>
<feature type="helix" evidence="23">
    <location>
        <begin position="187"/>
        <end position="207"/>
    </location>
</feature>
<feature type="strand" evidence="23">
    <location>
        <begin position="210"/>
        <end position="212"/>
    </location>
</feature>
<feature type="helix" evidence="23">
    <location>
        <begin position="215"/>
        <end position="220"/>
    </location>
</feature>
<feature type="strand" evidence="23">
    <location>
        <begin position="223"/>
        <end position="226"/>
    </location>
</feature>
<feature type="turn" evidence="23">
    <location>
        <begin position="234"/>
        <end position="236"/>
    </location>
</feature>
<feature type="helix" evidence="23">
    <location>
        <begin position="237"/>
        <end position="249"/>
    </location>
</feature>
<feature type="helix" evidence="23">
    <location>
        <begin position="255"/>
        <end position="262"/>
    </location>
</feature>
<feature type="strand" evidence="23">
    <location>
        <begin position="264"/>
        <end position="266"/>
    </location>
</feature>
<feature type="helix" evidence="23">
    <location>
        <begin position="267"/>
        <end position="296"/>
    </location>
</feature>
<feature type="turn" evidence="23">
    <location>
        <begin position="300"/>
        <end position="302"/>
    </location>
</feature>
<feature type="strand" evidence="21">
    <location>
        <begin position="303"/>
        <end position="305"/>
    </location>
</feature>
<feature type="turn" evidence="23">
    <location>
        <begin position="310"/>
        <end position="314"/>
    </location>
</feature>
<feature type="helix" evidence="23">
    <location>
        <begin position="316"/>
        <end position="318"/>
    </location>
</feature>
<feature type="helix" evidence="23">
    <location>
        <begin position="319"/>
        <end position="326"/>
    </location>
</feature>
<feature type="helix" evidence="23">
    <location>
        <begin position="330"/>
        <end position="362"/>
    </location>
</feature>
<feature type="helix" evidence="23">
    <location>
        <begin position="363"/>
        <end position="368"/>
    </location>
</feature>
<feature type="helix" evidence="23">
    <location>
        <begin position="374"/>
        <end position="398"/>
    </location>
</feature>
<feature type="helix" evidence="23">
    <location>
        <begin position="402"/>
        <end position="408"/>
    </location>
</feature>
<feature type="helix" evidence="23">
    <location>
        <begin position="411"/>
        <end position="425"/>
    </location>
</feature>
<feature type="helix" evidence="23">
    <location>
        <begin position="432"/>
        <end position="448"/>
    </location>
</feature>
<feature type="turn" evidence="23">
    <location>
        <begin position="452"/>
        <end position="455"/>
    </location>
</feature>
<feature type="helix" evidence="23">
    <location>
        <begin position="479"/>
        <end position="504"/>
    </location>
</feature>
<feature type="strand" evidence="23">
    <location>
        <begin position="505"/>
        <end position="507"/>
    </location>
</feature>
<feature type="helix" evidence="23">
    <location>
        <begin position="509"/>
        <end position="511"/>
    </location>
</feature>
<name>SC5A7_HUMAN</name>
<keyword id="KW-0002">3D-structure</keyword>
<keyword id="KW-1003">Cell membrane</keyword>
<keyword id="KW-0966">Cell projection</keyword>
<keyword id="KW-1004">Congenital myasthenic syndrome</keyword>
<keyword id="KW-0968">Cytoplasmic vesicle</keyword>
<keyword id="KW-0225">Disease variant</keyword>
<keyword id="KW-0967">Endosome</keyword>
<keyword id="KW-0325">Glycoprotein</keyword>
<keyword id="KW-0406">Ion transport</keyword>
<keyword id="KW-0472">Membrane</keyword>
<keyword id="KW-0523">Neurodegeneration</keyword>
<keyword id="KW-0622">Neuropathy</keyword>
<keyword id="KW-0530">Neurotransmitter biosynthesis</keyword>
<keyword id="KW-0597">Phosphoprotein</keyword>
<keyword id="KW-1267">Proteomics identification</keyword>
<keyword id="KW-1185">Reference proteome</keyword>
<keyword id="KW-0915">Sodium</keyword>
<keyword id="KW-0739">Sodium transport</keyword>
<keyword id="KW-0769">Symport</keyword>
<keyword id="KW-0770">Synapse</keyword>
<keyword id="KW-0812">Transmembrane</keyword>
<keyword id="KW-1133">Transmembrane helix</keyword>
<keyword id="KW-0813">Transport</keyword>
<comment type="function">
    <text evidence="4 5 6 7 8 9 11 12 13">High-affinity Na(+)-coupled choline transmembrane symporter (PubMed:11027560, PubMed:11068039, PubMed:12237312, PubMed:12969261, PubMed:17005849, PubMed:23132865, PubMed:23141292, PubMed:27569547). Functions as an electrogenic, voltage-dependent transporter with variable charge/choline stoichiometry (PubMed:17005849). Choline uptake and choline-induced current is also Cl(-)-dependent where Cl(-) is likely a regulatory ion rather than cotransported ion (PubMed:11068039, PubMed:12237312, PubMed:17005849). Plays a critical role in acetylcholine (ACh) synthesis by taking up the substrate choline from the synaptic cleft into the presynaptic nerve terminals after neurotransmitter release (PubMed:27569547). SLC5A7/CHT1-mediated choline high-affinity transport in cholinergic neurons is the rate-limiting step for production of ACh, thereby facilitating communication by subsequent action potentials (PubMed:11027560). Localized predominantly in presynaptic terminal intracellular organelles, and translocated to the plasma membrane in active form in response to neuronal activity (PubMed:12969261, PubMed:15953352).</text>
</comment>
<comment type="catalytic activity">
    <reaction evidence="4 5 6 7 9 11 12 13">
        <text>choline(out) + n Na(+)(out) = choline(in) + n Na(+)(in)</text>
        <dbReference type="Rhea" id="RHEA:76443"/>
        <dbReference type="ChEBI" id="CHEBI:15354"/>
        <dbReference type="ChEBI" id="CHEBI:29101"/>
    </reaction>
</comment>
<comment type="activity regulation">
    <text evidence="4 5 6 7 8 9 11 18">Choline uptake activity is regulated by SLC5A7/CHT1 internalization (inactive form) from the cell surface and recycling of internalized SLC5A7/CHT1 into the cell surface (active form) (Probable) (PubMed:12969261, PubMed:15953352). Activated by extracellular chloride ion (PubMed:11068039, PubMed:12237312, PubMed:17005849). Specifically inhibited by nanomolar concentrations of hemicholinium 3 (PubMed:11027560, PubMed:11068039, PubMed:12237312, PubMed:12969261, PubMed:17005849, PubMed:23132865).</text>
</comment>
<comment type="biophysicochemical properties">
    <kinetics>
        <KM evidence="4">1.6 uM for choline</KM>
        <KM evidence="5">2 uM for choline</KM>
        <KM evidence="7">0.8 uM for choline</KM>
        <KM evidence="9">0.7 uM for choline</KM>
        <KM evidence="6">2.8 uM for choline</KM>
        <Vmax evidence="6">102.0 pmol/min/mg protein for choline uptake</Vmax>
    </kinetics>
    <phDependence>
        <text evidence="9">Optimum pH is 9.5 for choline uptake. Transport efficiency decreased at more acidic pHs and is abolished at pH 5.5, which should coincide with transporter internalization.</text>
    </phDependence>
</comment>
<comment type="subunit">
    <text evidence="10 11">Homooligomerizes at cell surface (PubMed:23132865). Interacts with SEC14L1; may regulate SLC5A7 (PubMed:17092608).</text>
</comment>
<comment type="subcellular location">
    <subcellularLocation>
        <location evidence="4 7 13">Presynaptic cell membrane</location>
        <topology evidence="17">Multi-pass membrane protein</topology>
    </subcellularLocation>
    <subcellularLocation>
        <location evidence="1">Cell projection</location>
        <location evidence="1">Axon</location>
    </subcellularLocation>
    <subcellularLocation>
        <location evidence="7 8">Early endosome membrane</location>
        <topology evidence="17">Multi-pass membrane protein</topology>
    </subcellularLocation>
    <subcellularLocation>
        <location evidence="7">Cytoplasmic vesicle</location>
        <location evidence="7">Secretory vesicle</location>
        <location evidence="7">Synaptic vesicle membrane</location>
        <topology evidence="17">Multi-pass membrane protein</topology>
    </subcellularLocation>
    <text evidence="7 8 13">Localized at the neuromuscular junction (PubMed:27569547). Localization at the plasma membrane is transient due to the rapid endocytosis of SLC5A7/CHT1 via the clathrin-mediated pathway, where it localizes to early endosomes (PubMed:12969261, PubMed:15953352). Also localized to synaptic vesicles where it is likely mobilized to the cell surface by exocytosis (PubMed:12969261).</text>
</comment>
<comment type="tissue specificity">
    <text evidence="4 5 13">Expressed in putamen, spinal cord and medulla (PubMed:11027560, PubMed:11068039). Expressed in cholinergic neurons (PubMed:27569547).</text>
</comment>
<comment type="domain">
    <text evidence="8 9">The C-terminal dileucine-like motif (DKTILV) controls SLC5A7/CHT1 internalization in clathrin-coated vesicles to early endosomes as well as choline transporter activity.</text>
</comment>
<comment type="PTM">
    <text evidence="1">Phosphorylated.</text>
</comment>
<comment type="disease" evidence="12">
    <disease id="DI-03689">
        <name>Neuronopathy, distal hereditary motor, autosomal dominant 7</name>
        <acronym>HMND7</acronym>
        <description>A form of distal hereditary motor neuronopathy, a heterogeneous group of neuromuscular disorders caused by selective degeneration of motor neurons in the anterior horn of the spinal cord, without sensory deficit in the posterior horn. The overall clinical picture consists of a classical distal muscular atrophy syndrome in the legs without clinical sensory loss. The disease starts with weakness and wasting of distal muscles of the anterior tibial and peroneal compartments of the legs. Later on, weakness and atrophy may expand to the proximal muscles of the lower limbs and/or to the distal upper limbs. HMND7 is characterized by onset in the second decade of progressive distal muscle wasting and weakness affecting the upper and lower limbs and resulting in walking difficulties and hand grip. There is significant muscle atrophy of the hands and lower limbs. The disorder is associated with vocal cord paresis due to involvement of the tenth cranial nerve.</description>
        <dbReference type="MIM" id="158580"/>
    </disease>
    <text>The disease is caused by variants affecting the gene represented in this entry.</text>
</comment>
<comment type="disease" evidence="13">
    <disease id="DI-04861">
        <name>Myasthenic syndrome, congenital, 20, presynaptic</name>
        <acronym>CMS20</acronym>
        <description>A form of congenital myasthenic syndrome, a group of disorders characterized by failure of neuromuscular transmission, including pre-synaptic, synaptic, and post-synaptic disorders that are not of autoimmune origin. Clinical features are easy fatigability and muscle weakness. CMS20 is an autosomal recessive, pre-synaptic form characterized by severe hypotonia and episodic apnea soon after birth, generalized limb fatigability and weakness, delayed walking, ptosis, poor sucking and swallowing.</description>
        <dbReference type="MIM" id="617143"/>
    </disease>
    <text>The disease is caused by variants affecting the gene represented in this entry.</text>
</comment>
<comment type="similarity">
    <text evidence="17">Belongs to the sodium:solute symporter (SSF) (TC 2.A.21) family.</text>
</comment>
<protein>
    <recommendedName>
        <fullName evidence="15">High affinity choline transporter 1</fullName>
        <shortName evidence="15">hCHT1</shortName>
    </recommendedName>
    <alternativeName>
        <fullName evidence="14">Hemicholinium-3-sensitive choline transporter</fullName>
        <shortName evidence="14">CHT</shortName>
    </alternativeName>
    <alternativeName>
        <fullName evidence="16">Solute carrier family 5 member 7</fullName>
    </alternativeName>
</protein>
<proteinExistence type="evidence at protein level"/>
<organism>
    <name type="scientific">Homo sapiens</name>
    <name type="common">Human</name>
    <dbReference type="NCBI Taxonomy" id="9606"/>
    <lineage>
        <taxon>Eukaryota</taxon>
        <taxon>Metazoa</taxon>
        <taxon>Chordata</taxon>
        <taxon>Craniata</taxon>
        <taxon>Vertebrata</taxon>
        <taxon>Euteleostomi</taxon>
        <taxon>Mammalia</taxon>
        <taxon>Eutheria</taxon>
        <taxon>Euarchontoglires</taxon>
        <taxon>Primates</taxon>
        <taxon>Haplorrhini</taxon>
        <taxon>Catarrhini</taxon>
        <taxon>Hominidae</taxon>
        <taxon>Homo</taxon>
    </lineage>
</organism>
<evidence type="ECO:0000250" key="1">
    <source>
        <dbReference type="UniProtKB" id="Q8BGY9"/>
    </source>
</evidence>
<evidence type="ECO:0000250" key="2">
    <source>
        <dbReference type="UniProtKB" id="Q9JMD7"/>
    </source>
</evidence>
<evidence type="ECO:0000255" key="3"/>
<evidence type="ECO:0000269" key="4">
    <source>
    </source>
</evidence>
<evidence type="ECO:0000269" key="5">
    <source>
    </source>
</evidence>
<evidence type="ECO:0000269" key="6">
    <source>
    </source>
</evidence>
<evidence type="ECO:0000269" key="7">
    <source>
    </source>
</evidence>
<evidence type="ECO:0000269" key="8">
    <source>
    </source>
</evidence>
<evidence type="ECO:0000269" key="9">
    <source>
    </source>
</evidence>
<evidence type="ECO:0000269" key="10">
    <source>
    </source>
</evidence>
<evidence type="ECO:0000269" key="11">
    <source>
    </source>
</evidence>
<evidence type="ECO:0000269" key="12">
    <source>
    </source>
</evidence>
<evidence type="ECO:0000269" key="13">
    <source>
    </source>
</evidence>
<evidence type="ECO:0000303" key="14">
    <source>
    </source>
</evidence>
<evidence type="ECO:0000303" key="15">
    <source>
    </source>
</evidence>
<evidence type="ECO:0000303" key="16">
    <source>
    </source>
</evidence>
<evidence type="ECO:0000305" key="17"/>
<evidence type="ECO:0000305" key="18">
    <source>
    </source>
</evidence>
<evidence type="ECO:0000312" key="19">
    <source>
        <dbReference type="HGNC" id="HGNC:14025"/>
    </source>
</evidence>
<evidence type="ECO:0007829" key="20">
    <source>
        <dbReference type="PDB" id="8ZQO"/>
    </source>
</evidence>
<evidence type="ECO:0007829" key="21">
    <source>
        <dbReference type="PDB" id="8ZQQ"/>
    </source>
</evidence>
<evidence type="ECO:0007829" key="22">
    <source>
        <dbReference type="PDB" id="9BFI"/>
    </source>
</evidence>
<evidence type="ECO:0007829" key="23">
    <source>
        <dbReference type="PDB" id="9BFJ"/>
    </source>
</evidence>